<gene>
    <name evidence="1" type="primary">rpsE</name>
    <name type="ordered locus">BTH_I3051</name>
</gene>
<organism>
    <name type="scientific">Burkholderia thailandensis (strain ATCC 700388 / DSM 13276 / CCUG 48851 / CIP 106301 / E264)</name>
    <dbReference type="NCBI Taxonomy" id="271848"/>
    <lineage>
        <taxon>Bacteria</taxon>
        <taxon>Pseudomonadati</taxon>
        <taxon>Pseudomonadota</taxon>
        <taxon>Betaproteobacteria</taxon>
        <taxon>Burkholderiales</taxon>
        <taxon>Burkholderiaceae</taxon>
        <taxon>Burkholderia</taxon>
        <taxon>pseudomallei group</taxon>
    </lineage>
</organism>
<protein>
    <recommendedName>
        <fullName evidence="1">Small ribosomal subunit protein uS5</fullName>
    </recommendedName>
    <alternativeName>
        <fullName evidence="2">30S ribosomal protein S5</fullName>
    </alternativeName>
</protein>
<sequence>MAKMQAKVQADERDDGLREKMISVNRVTKVVKGGRILGFAALTVVGDGDGRVGMGKGKAKEVPVAVQKAMEQARRNMFKVPLKNGTLQHEVHGKHGASTVLLAPAKDGTGVIAGGPMRAVFDVMGVQNVVAKSHGSTNPYNLVRATLDGLRKQSTPGDIAAKRGKSVEEILG</sequence>
<keyword id="KW-0687">Ribonucleoprotein</keyword>
<keyword id="KW-0689">Ribosomal protein</keyword>
<keyword id="KW-0694">RNA-binding</keyword>
<keyword id="KW-0699">rRNA-binding</keyword>
<feature type="chain" id="PRO_0000323092" description="Small ribosomal subunit protein uS5">
    <location>
        <begin position="1"/>
        <end position="172"/>
    </location>
</feature>
<feature type="domain" description="S5 DRBM" evidence="1">
    <location>
        <begin position="17"/>
        <end position="80"/>
    </location>
</feature>
<comment type="function">
    <text evidence="1">With S4 and S12 plays an important role in translational accuracy.</text>
</comment>
<comment type="function">
    <text evidence="1">Located at the back of the 30S subunit body where it stabilizes the conformation of the head with respect to the body.</text>
</comment>
<comment type="subunit">
    <text evidence="1">Part of the 30S ribosomal subunit. Contacts proteins S4 and S8.</text>
</comment>
<comment type="domain">
    <text>The N-terminal domain interacts with the head of the 30S subunit; the C-terminal domain interacts with the body and contacts protein S4. The interaction surface between S4 and S5 is involved in control of translational fidelity.</text>
</comment>
<comment type="similarity">
    <text evidence="1">Belongs to the universal ribosomal protein uS5 family.</text>
</comment>
<proteinExistence type="inferred from homology"/>
<evidence type="ECO:0000255" key="1">
    <source>
        <dbReference type="HAMAP-Rule" id="MF_01307"/>
    </source>
</evidence>
<evidence type="ECO:0000305" key="2"/>
<reference key="1">
    <citation type="journal article" date="2005" name="BMC Genomics">
        <title>Bacterial genome adaptation to niches: divergence of the potential virulence genes in three Burkholderia species of different survival strategies.</title>
        <authorList>
            <person name="Kim H.S."/>
            <person name="Schell M.A."/>
            <person name="Yu Y."/>
            <person name="Ulrich R.L."/>
            <person name="Sarria S.H."/>
            <person name="Nierman W.C."/>
            <person name="DeShazer D."/>
        </authorList>
    </citation>
    <scope>NUCLEOTIDE SEQUENCE [LARGE SCALE GENOMIC DNA]</scope>
    <source>
        <strain>ATCC 700388 / DSM 13276 / CCUG 48851 / CIP 106301 / E264</strain>
    </source>
</reference>
<name>RS5_BURTA</name>
<dbReference type="EMBL" id="CP000086">
    <property type="protein sequence ID" value="ABC39012.1"/>
    <property type="molecule type" value="Genomic_DNA"/>
</dbReference>
<dbReference type="RefSeq" id="WP_009888402.1">
    <property type="nucleotide sequence ID" value="NZ_CP008786.1"/>
</dbReference>
<dbReference type="SMR" id="Q2SU44"/>
<dbReference type="GeneID" id="95549715"/>
<dbReference type="KEGG" id="bte:BTH_I3051"/>
<dbReference type="HOGENOM" id="CLU_065898_2_2_4"/>
<dbReference type="Proteomes" id="UP000001930">
    <property type="component" value="Chromosome I"/>
</dbReference>
<dbReference type="GO" id="GO:0015935">
    <property type="term" value="C:small ribosomal subunit"/>
    <property type="evidence" value="ECO:0007669"/>
    <property type="project" value="InterPro"/>
</dbReference>
<dbReference type="GO" id="GO:0019843">
    <property type="term" value="F:rRNA binding"/>
    <property type="evidence" value="ECO:0007669"/>
    <property type="project" value="UniProtKB-UniRule"/>
</dbReference>
<dbReference type="GO" id="GO:0003735">
    <property type="term" value="F:structural constituent of ribosome"/>
    <property type="evidence" value="ECO:0007669"/>
    <property type="project" value="InterPro"/>
</dbReference>
<dbReference type="GO" id="GO:0006412">
    <property type="term" value="P:translation"/>
    <property type="evidence" value="ECO:0007669"/>
    <property type="project" value="UniProtKB-UniRule"/>
</dbReference>
<dbReference type="FunFam" id="3.30.160.20:FF:000001">
    <property type="entry name" value="30S ribosomal protein S5"/>
    <property type="match status" value="1"/>
</dbReference>
<dbReference type="FunFam" id="3.30.230.10:FF:000002">
    <property type="entry name" value="30S ribosomal protein S5"/>
    <property type="match status" value="1"/>
</dbReference>
<dbReference type="Gene3D" id="3.30.160.20">
    <property type="match status" value="1"/>
</dbReference>
<dbReference type="Gene3D" id="3.30.230.10">
    <property type="match status" value="1"/>
</dbReference>
<dbReference type="HAMAP" id="MF_01307_B">
    <property type="entry name" value="Ribosomal_uS5_B"/>
    <property type="match status" value="1"/>
</dbReference>
<dbReference type="InterPro" id="IPR020568">
    <property type="entry name" value="Ribosomal_Su5_D2-typ_SF"/>
</dbReference>
<dbReference type="InterPro" id="IPR000851">
    <property type="entry name" value="Ribosomal_uS5"/>
</dbReference>
<dbReference type="InterPro" id="IPR005712">
    <property type="entry name" value="Ribosomal_uS5_bac-type"/>
</dbReference>
<dbReference type="InterPro" id="IPR005324">
    <property type="entry name" value="Ribosomal_uS5_C"/>
</dbReference>
<dbReference type="InterPro" id="IPR013810">
    <property type="entry name" value="Ribosomal_uS5_N"/>
</dbReference>
<dbReference type="InterPro" id="IPR018192">
    <property type="entry name" value="Ribosomal_uS5_N_CS"/>
</dbReference>
<dbReference type="InterPro" id="IPR014721">
    <property type="entry name" value="Ribsml_uS5_D2-typ_fold_subgr"/>
</dbReference>
<dbReference type="NCBIfam" id="TIGR01021">
    <property type="entry name" value="rpsE_bact"/>
    <property type="match status" value="1"/>
</dbReference>
<dbReference type="PANTHER" id="PTHR48277">
    <property type="entry name" value="MITOCHONDRIAL RIBOSOMAL PROTEIN S5"/>
    <property type="match status" value="1"/>
</dbReference>
<dbReference type="PANTHER" id="PTHR48277:SF1">
    <property type="entry name" value="MITOCHONDRIAL RIBOSOMAL PROTEIN S5"/>
    <property type="match status" value="1"/>
</dbReference>
<dbReference type="Pfam" id="PF00333">
    <property type="entry name" value="Ribosomal_S5"/>
    <property type="match status" value="1"/>
</dbReference>
<dbReference type="Pfam" id="PF03719">
    <property type="entry name" value="Ribosomal_S5_C"/>
    <property type="match status" value="1"/>
</dbReference>
<dbReference type="SUPFAM" id="SSF54768">
    <property type="entry name" value="dsRNA-binding domain-like"/>
    <property type="match status" value="1"/>
</dbReference>
<dbReference type="SUPFAM" id="SSF54211">
    <property type="entry name" value="Ribosomal protein S5 domain 2-like"/>
    <property type="match status" value="1"/>
</dbReference>
<dbReference type="PROSITE" id="PS00585">
    <property type="entry name" value="RIBOSOMAL_S5"/>
    <property type="match status" value="1"/>
</dbReference>
<dbReference type="PROSITE" id="PS50881">
    <property type="entry name" value="S5_DSRBD"/>
    <property type="match status" value="1"/>
</dbReference>
<accession>Q2SU44</accession>